<name>SC22B_HUMAN</name>
<organism>
    <name type="scientific">Homo sapiens</name>
    <name type="common">Human</name>
    <dbReference type="NCBI Taxonomy" id="9606"/>
    <lineage>
        <taxon>Eukaryota</taxon>
        <taxon>Metazoa</taxon>
        <taxon>Chordata</taxon>
        <taxon>Craniata</taxon>
        <taxon>Vertebrata</taxon>
        <taxon>Euteleostomi</taxon>
        <taxon>Mammalia</taxon>
        <taxon>Eutheria</taxon>
        <taxon>Euarchontoglires</taxon>
        <taxon>Primates</taxon>
        <taxon>Haplorrhini</taxon>
        <taxon>Catarrhini</taxon>
        <taxon>Hominidae</taxon>
        <taxon>Homo</taxon>
    </lineage>
</organism>
<evidence type="ECO:0000250" key="1">
    <source>
        <dbReference type="UniProtKB" id="Q4KM74"/>
    </source>
</evidence>
<evidence type="ECO:0000255" key="2"/>
<evidence type="ECO:0000255" key="3">
    <source>
        <dbReference type="PROSITE-ProRule" id="PRU00231"/>
    </source>
</evidence>
<evidence type="ECO:0000255" key="4">
    <source>
        <dbReference type="PROSITE-ProRule" id="PRU00290"/>
    </source>
</evidence>
<evidence type="ECO:0000269" key="5">
    <source>
    </source>
</evidence>
<evidence type="ECO:0000269" key="6">
    <source>
    </source>
</evidence>
<evidence type="ECO:0000269" key="7">
    <source>
    </source>
</evidence>
<evidence type="ECO:0000269" key="8">
    <source>
    </source>
</evidence>
<evidence type="ECO:0000269" key="9">
    <source>
    </source>
</evidence>
<evidence type="ECO:0000269" key="10">
    <source ref="5"/>
</evidence>
<evidence type="ECO:0000305" key="11"/>
<evidence type="ECO:0007744" key="12">
    <source>
        <dbReference type="PDB" id="2NUP"/>
    </source>
</evidence>
<evidence type="ECO:0007744" key="13">
    <source>
        <dbReference type="PDB" id="2NUT"/>
    </source>
</evidence>
<evidence type="ECO:0007744" key="14">
    <source>
        <dbReference type="PDB" id="3EGD"/>
    </source>
</evidence>
<evidence type="ECO:0007744" key="15">
    <source>
        <dbReference type="PDB" id="3EGX"/>
    </source>
</evidence>
<evidence type="ECO:0007744" key="16">
    <source>
    </source>
</evidence>
<evidence type="ECO:0007744" key="17">
    <source>
    </source>
</evidence>
<evidence type="ECO:0007744" key="18">
    <source>
    </source>
</evidence>
<evidence type="ECO:0007744" key="19">
    <source>
    </source>
</evidence>
<evidence type="ECO:0007744" key="20">
    <source>
    </source>
</evidence>
<evidence type="ECO:0007744" key="21">
    <source>
    </source>
</evidence>
<evidence type="ECO:0007744" key="22">
    <source>
    </source>
</evidence>
<evidence type="ECO:0007744" key="23">
    <source>
    </source>
</evidence>
<evidence type="ECO:0007829" key="24">
    <source>
        <dbReference type="PDB" id="2NUT"/>
    </source>
</evidence>
<evidence type="ECO:0007829" key="25">
    <source>
        <dbReference type="PDB" id="3EGD"/>
    </source>
</evidence>
<evidence type="ECO:0007829" key="26">
    <source>
        <dbReference type="PDB" id="8HR0"/>
    </source>
</evidence>
<comment type="function">
    <text evidence="5">SNARE involved in targeting and fusion of ER-derived transport vesicles with the Golgi complex as well as Golgi-derived retrograde transport vesicles with the ER.</text>
</comment>
<comment type="subunit">
    <text evidence="1 5 7 8 9">Interacts with STX17 (By similarity). Component of two distinct SNARE complexes consisting of STX5, GOSR2/BOS1, BET1 and SEC22B or STX18, USE1L, BNIP1/SEC20L and SEC22B. YKT6 can probably replace SEC22B in either complex. Interacts with the COPII Sec23/24 complex composed of SEC23A and SEC24A; recruits SEC22B into COPII-coated vesicles to allow its transport from the endoplasmic reticulum to the Golgi (PubMed:17499046, PubMed:18843296). Interacts with BET1 (PubMed:34779586).</text>
</comment>
<comment type="interaction">
    <interactant intactId="EBI-1058865">
        <id>O75396</id>
    </interactant>
    <interactant intactId="EBI-348517">
        <id>O95870</id>
        <label>ABHD16A</label>
    </interactant>
    <organismsDiffer>false</organismsDiffer>
    <experiments>3</experiments>
</comment>
<comment type="interaction">
    <interactant intactId="EBI-1058865">
        <id>O75396</id>
    </interactant>
    <interactant intactId="EBI-11957045">
        <id>Q9NVV5-2</id>
        <label>AIG1</label>
    </interactant>
    <organismsDiffer>false</organismsDiffer>
    <experiments>3</experiments>
</comment>
<comment type="interaction">
    <interactant intactId="EBI-1058865">
        <id>O75396</id>
    </interactant>
    <interactant intactId="EBI-13059134">
        <id>Q13520</id>
        <label>AQP6</label>
    </interactant>
    <organismsDiffer>false</organismsDiffer>
    <experiments>3</experiments>
</comment>
<comment type="interaction">
    <interactant intactId="EBI-1058865">
        <id>O75396</id>
    </interactant>
    <interactant intactId="EBI-7797864">
        <id>P11912</id>
        <label>CD79A</label>
    </interactant>
    <organismsDiffer>false</organismsDiffer>
    <experiments>3</experiments>
</comment>
<comment type="interaction">
    <interactant intactId="EBI-1058865">
        <id>O75396</id>
    </interactant>
    <interactant intactId="EBI-18038706">
        <id>Q6ZMG9-2</id>
        <label>CERS6</label>
    </interactant>
    <organismsDiffer>false</organismsDiffer>
    <experiments>3</experiments>
</comment>
<comment type="interaction">
    <interactant intactId="EBI-1058865">
        <id>O75396</id>
    </interactant>
    <interactant intactId="EBI-740744">
        <id>O95471</id>
        <label>CLDN7</label>
    </interactant>
    <organismsDiffer>false</organismsDiffer>
    <experiments>3</experiments>
</comment>
<comment type="interaction">
    <interactant intactId="EBI-1058865">
        <id>O75396</id>
    </interactant>
    <interactant intactId="EBI-17274839">
        <id>P58418</id>
        <label>CLRN1</label>
    </interactant>
    <organismsDiffer>false</organismsDiffer>
    <experiments>3</experiments>
</comment>
<comment type="interaction">
    <interactant intactId="EBI-1058865">
        <id>O75396</id>
    </interactant>
    <interactant intactId="EBI-18013275">
        <id>Q7Z7G2</id>
        <label>CPLX4</label>
    </interactant>
    <organismsDiffer>false</organismsDiffer>
    <experiments>3</experiments>
</comment>
<comment type="interaction">
    <interactant intactId="EBI-1058865">
        <id>O75396</id>
    </interactant>
    <interactant intactId="EBI-6942903">
        <id>Q96BA8</id>
        <label>CREB3L1</label>
    </interactant>
    <organismsDiffer>false</organismsDiffer>
    <experiments>3</experiments>
</comment>
<comment type="interaction">
    <interactant intactId="EBI-1058865">
        <id>O75396</id>
    </interactant>
    <interactant intactId="EBI-10962476">
        <id>Q9P2X0-2</id>
        <label>DPM3</label>
    </interactant>
    <organismsDiffer>false</organismsDiffer>
    <experiments>3</experiments>
</comment>
<comment type="interaction">
    <interactant intactId="EBI-1058865">
        <id>O75396</id>
    </interactant>
    <interactant intactId="EBI-3915253">
        <id>Q15125</id>
        <label>EBP</label>
    </interactant>
    <organismsDiffer>false</organismsDiffer>
    <experiments>3</experiments>
</comment>
<comment type="interaction">
    <interactant intactId="EBI-1058865">
        <id>O75396</id>
    </interactant>
    <interactant intactId="EBI-18535450">
        <id>Q9GZR5</id>
        <label>ELOVL4</label>
    </interactant>
    <organismsDiffer>false</organismsDiffer>
    <experiments>3</experiments>
</comment>
<comment type="interaction">
    <interactant intactId="EBI-1058865">
        <id>O75396</id>
    </interactant>
    <interactant intactId="EBI-781551">
        <id>Q9Y282</id>
        <label>ERGIC3</label>
    </interactant>
    <organismsDiffer>false</organismsDiffer>
    <experiments>3</experiments>
</comment>
<comment type="interaction">
    <interactant intactId="EBI-1058865">
        <id>O75396</id>
    </interactant>
    <interactant intactId="EBI-18636064">
        <id>Q8TBP5</id>
        <label>FAM174A</label>
    </interactant>
    <organismsDiffer>false</organismsDiffer>
    <experiments>3</experiments>
</comment>
<comment type="interaction">
    <interactant intactId="EBI-1058865">
        <id>O75396</id>
    </interactant>
    <interactant intactId="EBI-18304435">
        <id>Q5JX71</id>
        <label>FAM209A</label>
    </interactant>
    <organismsDiffer>false</organismsDiffer>
    <experiments>3</experiments>
</comment>
<comment type="interaction">
    <interactant intactId="EBI-1058865">
        <id>O75396</id>
    </interactant>
    <interactant intactId="EBI-12142257">
        <id>Q8TBE3</id>
        <label>FNDC9</label>
    </interactant>
    <organismsDiffer>false</organismsDiffer>
    <experiments>3</experiments>
</comment>
<comment type="interaction">
    <interactant intactId="EBI-1058865">
        <id>O75396</id>
    </interactant>
    <interactant intactId="EBI-17458373">
        <id>P48165</id>
        <label>GJA8</label>
    </interactant>
    <organismsDiffer>false</organismsDiffer>
    <experiments>3</experiments>
</comment>
<comment type="interaction">
    <interactant intactId="EBI-1058865">
        <id>O75396</id>
    </interactant>
    <interactant intactId="EBI-3909454">
        <id>O95377</id>
        <label>GJB5</label>
    </interactant>
    <organismsDiffer>false</organismsDiffer>
    <experiments>3</experiments>
</comment>
<comment type="interaction">
    <interactant intactId="EBI-1058865">
        <id>O75396</id>
    </interactant>
    <interactant intactId="EBI-13345609">
        <id>O95452</id>
        <label>GJB6</label>
    </interactant>
    <organismsDiffer>false</organismsDiffer>
    <experiments>3</experiments>
</comment>
<comment type="interaction">
    <interactant intactId="EBI-1058865">
        <id>O75396</id>
    </interactant>
    <interactant intactId="EBI-3917143">
        <id>Q5T7V8</id>
        <label>GORAB</label>
    </interactant>
    <organismsDiffer>false</organismsDiffer>
    <experiments>3</experiments>
</comment>
<comment type="interaction">
    <interactant intactId="EBI-1058865">
        <id>O75396</id>
    </interactant>
    <interactant intactId="EBI-13345167">
        <id>Q8TDT2</id>
        <label>GPR152</label>
    </interactant>
    <organismsDiffer>false</organismsDiffer>
    <experiments>3</experiments>
</comment>
<comment type="interaction">
    <interactant intactId="EBI-1058865">
        <id>O75396</id>
    </interactant>
    <interactant intactId="EBI-11721746">
        <id>Q8TED1</id>
        <label>GPX8</label>
    </interactant>
    <organismsDiffer>false</organismsDiffer>
    <experiments>3</experiments>
</comment>
<comment type="interaction">
    <interactant intactId="EBI-1058865">
        <id>O75396</id>
    </interactant>
    <interactant intactId="EBI-11427100">
        <id>P31937</id>
        <label>HIBADH</label>
    </interactant>
    <organismsDiffer>false</organismsDiffer>
    <experiments>3</experiments>
</comment>
<comment type="interaction">
    <interactant intactId="EBI-1058865">
        <id>O75396</id>
    </interactant>
    <interactant intactId="EBI-1052304">
        <id>Q8NBQ5</id>
        <label>HSD17B11</label>
    </interactant>
    <organismsDiffer>false</organismsDiffer>
    <experiments>3</experiments>
</comment>
<comment type="interaction">
    <interactant intactId="EBI-1058865">
        <id>O75396</id>
    </interactant>
    <interactant intactId="EBI-18053395">
        <id>Q7Z5P4</id>
        <label>HSD17B13</label>
    </interactant>
    <organismsDiffer>false</organismsDiffer>
    <experiments>3</experiments>
</comment>
<comment type="interaction">
    <interactant intactId="EBI-1058865">
        <id>O75396</id>
    </interactant>
    <interactant intactId="EBI-3905457">
        <id>P38484</id>
        <label>IFNGR2</label>
    </interactant>
    <organismsDiffer>false</organismsDiffer>
    <experiments>3</experiments>
</comment>
<comment type="interaction">
    <interactant intactId="EBI-1058865">
        <id>O75396</id>
    </interactant>
    <interactant intactId="EBI-10266796">
        <id>Q8N5M9</id>
        <label>JAGN1</label>
    </interactant>
    <organismsDiffer>false</organismsDiffer>
    <experiments>3</experiments>
</comment>
<comment type="interaction">
    <interactant intactId="EBI-1058865">
        <id>O75396</id>
    </interactant>
    <interactant intactId="EBI-8632435">
        <id>P43628</id>
        <label>KIR2DL3</label>
    </interactant>
    <organismsDiffer>false</organismsDiffer>
    <experiments>3</experiments>
</comment>
<comment type="interaction">
    <interactant intactId="EBI-1058865">
        <id>O75396</id>
    </interactant>
    <interactant intactId="EBI-18268016">
        <id>Q86WI0</id>
        <label>LHFPL1</label>
    </interactant>
    <organismsDiffer>false</organismsDiffer>
    <experiments>3</experiments>
</comment>
<comment type="interaction">
    <interactant intactId="EBI-1058865">
        <id>O75396</id>
    </interactant>
    <interactant intactId="EBI-2820517">
        <id>Q8TAF8</id>
        <label>LHFPL5</label>
    </interactant>
    <organismsDiffer>false</organismsDiffer>
    <experiments>3</experiments>
</comment>
<comment type="interaction">
    <interactant intactId="EBI-1058865">
        <id>O75396</id>
    </interactant>
    <interactant intactId="EBI-11956541">
        <id>Q9GZY8-5</id>
        <label>MFF</label>
    </interactant>
    <organismsDiffer>false</organismsDiffer>
    <experiments>3</experiments>
</comment>
<comment type="interaction">
    <interactant intactId="EBI-1058865">
        <id>O75396</id>
    </interactant>
    <interactant intactId="EBI-3920969">
        <id>Q6N075</id>
        <label>MFSD5</label>
    </interactant>
    <organismsDiffer>false</organismsDiffer>
    <experiments>3</experiments>
</comment>
<comment type="interaction">
    <interactant intactId="EBI-1058865">
        <id>O75396</id>
    </interactant>
    <interactant intactId="EBI-11324706">
        <id>Q99735</id>
        <label>MGST2</label>
    </interactant>
    <organismsDiffer>false</organismsDiffer>
    <experiments>3</experiments>
</comment>
<comment type="interaction">
    <interactant intactId="EBI-1058865">
        <id>O75396</id>
    </interactant>
    <interactant intactId="EBI-724754">
        <id>O14880</id>
        <label>MGST3</label>
    </interactant>
    <organismsDiffer>false</organismsDiffer>
    <experiments>3</experiments>
</comment>
<comment type="interaction">
    <interactant intactId="EBI-1058865">
        <id>O75396</id>
    </interactant>
    <interactant intactId="EBI-6163737">
        <id>Q8N4V1</id>
        <label>MMGT1</label>
    </interactant>
    <organismsDiffer>false</organismsDiffer>
    <experiments>3</experiments>
</comment>
<comment type="interaction">
    <interactant intactId="EBI-1058865">
        <id>O75396</id>
    </interactant>
    <interactant intactId="EBI-750085">
        <id>Q9Y676</id>
        <label>MRPS18B</label>
    </interactant>
    <organismsDiffer>false</organismsDiffer>
    <experiments>3</experiments>
</comment>
<comment type="interaction">
    <interactant intactId="EBI-1058865">
        <id>O75396</id>
    </interactant>
    <interactant intactId="EBI-2682365">
        <id>Q8N183</id>
        <label>NDUFAF2</label>
    </interactant>
    <organismsDiffer>false</organismsDiffer>
    <experiments>3</experiments>
</comment>
<comment type="interaction">
    <interactant intactId="EBI-1058865">
        <id>O75396</id>
    </interactant>
    <interactant intactId="EBI-7545592">
        <id>Q9H6H4</id>
        <label>REEP4</label>
    </interactant>
    <organismsDiffer>false</organismsDiffer>
    <experiments>3</experiments>
</comment>
<comment type="interaction">
    <interactant intactId="EBI-1058865">
        <id>O75396</id>
    </interactant>
    <interactant intactId="EBI-10269209">
        <id>Q8NC24</id>
        <label>RELL2</label>
    </interactant>
    <organismsDiffer>false</organismsDiffer>
    <experiments>3</experiments>
</comment>
<comment type="interaction">
    <interactant intactId="EBI-1058865">
        <id>O75396</id>
    </interactant>
    <interactant intactId="EBI-9916444">
        <id>Q8TEB9</id>
        <label>RHBDD1</label>
    </interactant>
    <organismsDiffer>false</organismsDiffer>
    <experiments>3</experiments>
</comment>
<comment type="interaction">
    <interactant intactId="EBI-1058865">
        <id>O75396</id>
    </interactant>
    <interactant intactId="EBI-17295964">
        <id>Q9NQQ7-3</id>
        <label>SLC35C2</label>
    </interactant>
    <organismsDiffer>false</organismsDiffer>
    <experiments>3</experiments>
</comment>
<comment type="interaction">
    <interactant intactId="EBI-1058865">
        <id>O75396</id>
    </interactant>
    <interactant intactId="EBI-725334">
        <id>Q9P2W9</id>
        <label>STX18</label>
    </interactant>
    <organismsDiffer>false</organismsDiffer>
    <experiments>6</experiments>
</comment>
<comment type="interaction">
    <interactant intactId="EBI-1058865">
        <id>O75396</id>
    </interactant>
    <interactant intactId="EBI-712466">
        <id>Q16623</id>
        <label>STX1A</label>
    </interactant>
    <organismsDiffer>false</organismsDiffer>
    <experiments>3</experiments>
</comment>
<comment type="interaction">
    <interactant intactId="EBI-1058865">
        <id>O75396</id>
    </interactant>
    <interactant intactId="EBI-11956649">
        <id>P32856-2</id>
        <label>STX2</label>
    </interactant>
    <organismsDiffer>false</organismsDiffer>
    <experiments>3</experiments>
</comment>
<comment type="interaction">
    <interactant intactId="EBI-1058865">
        <id>O75396</id>
    </interactant>
    <interactant intactId="EBI-744942">
        <id>Q12846</id>
        <label>STX4</label>
    </interactant>
    <organismsDiffer>false</organismsDiffer>
    <experiments>4</experiments>
</comment>
<comment type="interaction">
    <interactant intactId="EBI-1058865">
        <id>O75396</id>
    </interactant>
    <interactant intactId="EBI-714206">
        <id>Q13190</id>
        <label>STX5</label>
    </interactant>
    <organismsDiffer>false</organismsDiffer>
    <experiments>4</experiments>
</comment>
<comment type="interaction">
    <interactant intactId="EBI-1058865">
        <id>O75396</id>
    </interactant>
    <interactant intactId="EBI-12947623">
        <id>Q96MV1</id>
        <label>TLCD4</label>
    </interactant>
    <organismsDiffer>false</organismsDiffer>
    <experiments>3</experiments>
</comment>
<comment type="interaction">
    <interactant intactId="EBI-1058865">
        <id>O75396</id>
    </interactant>
    <interactant intactId="EBI-6448756">
        <id>Q96DZ7</id>
        <label>TM4SF19</label>
    </interactant>
    <organismsDiffer>false</organismsDiffer>
    <experiments>3</experiments>
</comment>
<comment type="interaction">
    <interactant intactId="EBI-1058865">
        <id>O75396</id>
    </interactant>
    <interactant intactId="EBI-7238458">
        <id>Q8IV31</id>
        <label>TMEM139</label>
    </interactant>
    <organismsDiffer>false</organismsDiffer>
    <experiments>3</experiments>
</comment>
<comment type="interaction">
    <interactant intactId="EBI-1058865">
        <id>O75396</id>
    </interactant>
    <interactant intactId="EBI-17684533">
        <id>Q9NRX6</id>
        <label>TMEM167B</label>
    </interactant>
    <organismsDiffer>false</organismsDiffer>
    <experiments>3</experiments>
</comment>
<comment type="interaction">
    <interactant intactId="EBI-1058865">
        <id>O75396</id>
    </interactant>
    <interactant intactId="EBI-12195227">
        <id>Q8NBD8</id>
        <label>TMEM229B</label>
    </interactant>
    <organismsDiffer>false</organismsDiffer>
    <experiments>3</experiments>
</comment>
<comment type="interaction">
    <interactant intactId="EBI-1058865">
        <id>O75396</id>
    </interactant>
    <interactant intactId="EBI-2548832">
        <id>Q8N661</id>
        <label>TMEM86B</label>
    </interactant>
    <organismsDiffer>false</organismsDiffer>
    <experiments>3</experiments>
</comment>
<comment type="subcellular location">
    <subcellularLocation>
        <location evidence="1">Endoplasmic reticulum membrane</location>
        <topology evidence="1">Single-pass type IV membrane protein</topology>
    </subcellularLocation>
    <subcellularLocation>
        <location evidence="1">Endoplasmic reticulum-Golgi intermediate compartment membrane</location>
    </subcellularLocation>
    <subcellularLocation>
        <location evidence="1">Golgi apparatus</location>
        <location evidence="1">cis-Golgi network membrane</location>
    </subcellularLocation>
    <subcellularLocation>
        <location evidence="1">Golgi apparatus</location>
        <location evidence="1">trans-Golgi network membrane</location>
    </subcellularLocation>
    <subcellularLocation>
        <location evidence="6">Melanosome</location>
    </subcellularLocation>
    <text evidence="1 6">Concentrated most in the intermediate compartment/cis-Golgi network and the cis-Golgi cisternae 1 and 2. Greatly reduced in concentration at the trans end of the Golgi apparatus (By similarity). Identified by mass spectrometry in melanosome fractions from stage I to stage IV (PubMed:17081065).</text>
</comment>
<comment type="similarity">
    <text evidence="11">Belongs to the synaptobrevin family.</text>
</comment>
<proteinExistence type="evidence at protein level"/>
<protein>
    <recommendedName>
        <fullName>Vesicle-trafficking protein SEC22b</fullName>
    </recommendedName>
    <alternativeName>
        <fullName>ER-Golgi SNARE of 24 kDa</fullName>
        <shortName>ERS-24</shortName>
        <shortName>ERS24</shortName>
    </alternativeName>
    <alternativeName>
        <fullName>SEC22 vesicle-trafficking protein homolog B</fullName>
    </alternativeName>
    <alternativeName>
        <fullName>SEC22 vesicle-trafficking protein-like 1</fullName>
    </alternativeName>
</protein>
<keyword id="KW-0002">3D-structure</keyword>
<keyword id="KW-0007">Acetylation</keyword>
<keyword id="KW-0175">Coiled coil</keyword>
<keyword id="KW-0903">Direct protein sequencing</keyword>
<keyword id="KW-0256">Endoplasmic reticulum</keyword>
<keyword id="KW-0931">ER-Golgi transport</keyword>
<keyword id="KW-0333">Golgi apparatus</keyword>
<keyword id="KW-0472">Membrane</keyword>
<keyword id="KW-0597">Phosphoprotein</keyword>
<keyword id="KW-0653">Protein transport</keyword>
<keyword id="KW-1267">Proteomics identification</keyword>
<keyword id="KW-1185">Reference proteome</keyword>
<keyword id="KW-0812">Transmembrane</keyword>
<keyword id="KW-1133">Transmembrane helix</keyword>
<keyword id="KW-0813">Transport</keyword>
<feature type="initiator methionine" description="Removed" evidence="10 23">
    <location>
        <position position="1"/>
    </location>
</feature>
<feature type="chain" id="PRO_0000206770" description="Vesicle-trafficking protein SEC22b">
    <location>
        <begin position="2"/>
        <end position="215"/>
    </location>
</feature>
<feature type="topological domain" description="Cytoplasmic" evidence="2">
    <location>
        <begin position="2"/>
        <end position="194"/>
    </location>
</feature>
<feature type="transmembrane region" description="Helical; Anchor for type IV membrane protein" evidence="2">
    <location>
        <begin position="195"/>
        <end position="215"/>
    </location>
</feature>
<feature type="domain" description="Longin" evidence="3">
    <location>
        <begin position="6"/>
        <end position="119"/>
    </location>
</feature>
<feature type="domain" description="v-SNARE coiled-coil homology" evidence="4">
    <location>
        <begin position="134"/>
        <end position="194"/>
    </location>
</feature>
<feature type="modified residue" description="N6-acetyllysine" evidence="18">
    <location>
        <position position="38"/>
    </location>
</feature>
<feature type="modified residue" description="Phosphoserine" evidence="16 17 19 20 21 22">
    <location>
        <position position="137"/>
    </location>
</feature>
<feature type="modified residue" description="Phosphothreonine" evidence="20">
    <location>
        <position position="140"/>
    </location>
</feature>
<feature type="modified residue" description="Phosphoserine" evidence="21">
    <location>
        <position position="164"/>
    </location>
</feature>
<feature type="modified residue" description="Phosphoserine" evidence="21 22">
    <location>
        <position position="168"/>
    </location>
</feature>
<feature type="modified residue" description="Phosphoserine" evidence="21">
    <location>
        <position position="174"/>
    </location>
</feature>
<feature type="modified residue" description="Phosphoserine" evidence="20 21">
    <location>
        <position position="177"/>
    </location>
</feature>
<feature type="strand" evidence="24">
    <location>
        <begin position="5"/>
        <end position="9"/>
    </location>
</feature>
<feature type="turn" evidence="24">
    <location>
        <begin position="10"/>
        <end position="12"/>
    </location>
</feature>
<feature type="strand" evidence="24">
    <location>
        <begin position="15"/>
        <end position="19"/>
    </location>
</feature>
<feature type="helix" evidence="24">
    <location>
        <begin position="30"/>
        <end position="43"/>
    </location>
</feature>
<feature type="strand" evidence="26">
    <location>
        <begin position="46"/>
        <end position="48"/>
    </location>
</feature>
<feature type="strand" evidence="24">
    <location>
        <begin position="50"/>
        <end position="56"/>
    </location>
</feature>
<feature type="strand" evidence="24">
    <location>
        <begin position="59"/>
        <end position="66"/>
    </location>
</feature>
<feature type="strand" evidence="24">
    <location>
        <begin position="69"/>
        <end position="76"/>
    </location>
</feature>
<feature type="helix" evidence="24">
    <location>
        <begin position="81"/>
        <end position="99"/>
    </location>
</feature>
<feature type="turn" evidence="24">
    <location>
        <begin position="100"/>
        <end position="105"/>
    </location>
</feature>
<feature type="turn" evidence="24">
    <location>
        <begin position="109"/>
        <end position="112"/>
    </location>
</feature>
<feature type="helix" evidence="24">
    <location>
        <begin position="113"/>
        <end position="115"/>
    </location>
</feature>
<feature type="helix" evidence="24">
    <location>
        <begin position="116"/>
        <end position="123"/>
    </location>
</feature>
<feature type="turn" evidence="24">
    <location>
        <begin position="124"/>
        <end position="126"/>
    </location>
</feature>
<feature type="turn" evidence="25">
    <location>
        <begin position="129"/>
        <end position="131"/>
    </location>
</feature>
<feature type="strand" evidence="24">
    <location>
        <begin position="150"/>
        <end position="152"/>
    </location>
</feature>
<feature type="helix" evidence="24">
    <location>
        <begin position="153"/>
        <end position="156"/>
    </location>
</feature>
<dbReference type="EMBL" id="AF047442">
    <property type="protein sequence ID" value="AAC39893.1"/>
    <property type="molecule type" value="mRNA"/>
</dbReference>
<dbReference type="EMBL" id="AK289875">
    <property type="protein sequence ID" value="BAF82564.1"/>
    <property type="molecule type" value="mRNA"/>
</dbReference>
<dbReference type="EMBL" id="AC245008">
    <property type="status" value="NOT_ANNOTATED_CDS"/>
    <property type="molecule type" value="Genomic_DNA"/>
</dbReference>
<dbReference type="EMBL" id="BC001364">
    <property type="protein sequence ID" value="AAH01364.1"/>
    <property type="molecule type" value="mRNA"/>
</dbReference>
<dbReference type="CCDS" id="CCDS83523.1"/>
<dbReference type="RefSeq" id="NP_004883.3">
    <property type="nucleotide sequence ID" value="NM_004892.6"/>
</dbReference>
<dbReference type="PDB" id="2NUP">
    <property type="method" value="X-ray"/>
    <property type="resolution" value="2.80 A"/>
    <property type="chains" value="C=1-195"/>
</dbReference>
<dbReference type="PDB" id="2NUT">
    <property type="method" value="X-ray"/>
    <property type="resolution" value="2.30 A"/>
    <property type="chains" value="C=1-195"/>
</dbReference>
<dbReference type="PDB" id="3EGD">
    <property type="method" value="X-ray"/>
    <property type="resolution" value="2.70 A"/>
    <property type="chains" value="C=1-157"/>
</dbReference>
<dbReference type="PDB" id="3EGX">
    <property type="method" value="X-ray"/>
    <property type="resolution" value="3.30 A"/>
    <property type="chains" value="C=1-157"/>
</dbReference>
<dbReference type="PDB" id="8HR0">
    <property type="method" value="X-ray"/>
    <property type="resolution" value="3.34 A"/>
    <property type="chains" value="C=1-199"/>
</dbReference>
<dbReference type="PDBsum" id="2NUP"/>
<dbReference type="PDBsum" id="2NUT"/>
<dbReference type="PDBsum" id="3EGD"/>
<dbReference type="PDBsum" id="3EGX"/>
<dbReference type="PDBsum" id="8HR0"/>
<dbReference type="SMR" id="O75396"/>
<dbReference type="BioGRID" id="114926">
    <property type="interactions" value="396"/>
</dbReference>
<dbReference type="DIP" id="DIP-50458N"/>
<dbReference type="FunCoup" id="O75396">
    <property type="interactions" value="3340"/>
</dbReference>
<dbReference type="IntAct" id="O75396">
    <property type="interactions" value="188"/>
</dbReference>
<dbReference type="MINT" id="O75396"/>
<dbReference type="STRING" id="9606.ENSP00000463393"/>
<dbReference type="ChEMBL" id="CHEMBL4295679"/>
<dbReference type="GlyConnect" id="1891">
    <property type="glycosylation" value="2 N-Linked glycans (1 site)"/>
</dbReference>
<dbReference type="GlyCosmos" id="O75396">
    <property type="glycosylation" value="1 site, 2 glycans"/>
</dbReference>
<dbReference type="GlyGen" id="O75396">
    <property type="glycosylation" value="2 sites, 4 N-linked glycans (1 site), 1 O-linked glycan (1 site)"/>
</dbReference>
<dbReference type="iPTMnet" id="O75396"/>
<dbReference type="MetOSite" id="O75396"/>
<dbReference type="PhosphoSitePlus" id="O75396"/>
<dbReference type="SwissPalm" id="O75396"/>
<dbReference type="BioMuta" id="SEC22B"/>
<dbReference type="CPTAC" id="CPTAC-129"/>
<dbReference type="CPTAC" id="CPTAC-130"/>
<dbReference type="jPOST" id="O75396"/>
<dbReference type="MassIVE" id="O75396"/>
<dbReference type="PaxDb" id="9606-ENSP00000463393"/>
<dbReference type="PeptideAtlas" id="O75396"/>
<dbReference type="ProteomicsDB" id="49967"/>
<dbReference type="Pumba" id="O75396"/>
<dbReference type="TopDownProteomics" id="O75396"/>
<dbReference type="Antibodypedia" id="72298">
    <property type="antibodies" value="211 antibodies from 25 providers"/>
</dbReference>
<dbReference type="DNASU" id="9554"/>
<dbReference type="Ensembl" id="ENST00000578049.4">
    <property type="protein sequence ID" value="ENSP00000463393.1"/>
    <property type="gene ID" value="ENSG00000265808.4"/>
</dbReference>
<dbReference type="GeneID" id="9554"/>
<dbReference type="KEGG" id="hsa:9554"/>
<dbReference type="MANE-Select" id="ENST00000578049.4">
    <property type="protein sequence ID" value="ENSP00000463393.1"/>
    <property type="RefSeq nucleotide sequence ID" value="NM_004892.6"/>
    <property type="RefSeq protein sequence ID" value="NP_004883.3"/>
</dbReference>
<dbReference type="UCSC" id="uc031unv.2">
    <property type="organism name" value="human"/>
</dbReference>
<dbReference type="AGR" id="HGNC:10700"/>
<dbReference type="CTD" id="9554"/>
<dbReference type="DisGeNET" id="9554"/>
<dbReference type="GeneCards" id="SEC22B"/>
<dbReference type="HGNC" id="HGNC:10700">
    <property type="gene designation" value="SEC22B"/>
</dbReference>
<dbReference type="HPA" id="ENSG00000265808">
    <property type="expression patterns" value="Low tissue specificity"/>
</dbReference>
<dbReference type="MIM" id="604029">
    <property type="type" value="gene"/>
</dbReference>
<dbReference type="neXtProt" id="NX_O75396"/>
<dbReference type="OpenTargets" id="ENSG00000265808"/>
<dbReference type="PharmGKB" id="PA35623"/>
<dbReference type="VEuPathDB" id="HostDB:ENSG00000265808"/>
<dbReference type="eggNOG" id="KOG0862">
    <property type="taxonomic scope" value="Eukaryota"/>
</dbReference>
<dbReference type="GeneTree" id="ENSGT00940000156349"/>
<dbReference type="HOGENOM" id="CLU_054453_4_1_1"/>
<dbReference type="InParanoid" id="O75396"/>
<dbReference type="OMA" id="FIYWRFF"/>
<dbReference type="OrthoDB" id="1719357at2759"/>
<dbReference type="PAN-GO" id="O75396">
    <property type="GO annotations" value="9 GO annotations based on evolutionary models"/>
</dbReference>
<dbReference type="PhylomeDB" id="O75396"/>
<dbReference type="PathwayCommons" id="O75396"/>
<dbReference type="Reactome" id="R-HSA-1236974">
    <property type="pathway name" value="ER-Phagosome pathway"/>
</dbReference>
<dbReference type="Reactome" id="R-HSA-204005">
    <property type="pathway name" value="COPII-mediated vesicle transport"/>
</dbReference>
<dbReference type="Reactome" id="R-HSA-5694530">
    <property type="pathway name" value="Cargo concentration in the ER"/>
</dbReference>
<dbReference type="Reactome" id="R-HSA-6811434">
    <property type="pathway name" value="COPI-dependent Golgi-to-ER retrograde traffic"/>
</dbReference>
<dbReference type="SignaLink" id="O75396"/>
<dbReference type="SIGNOR" id="O75396"/>
<dbReference type="BioGRID-ORCS" id="9554">
    <property type="hits" value="34 hits in 174 CRISPR screens"/>
</dbReference>
<dbReference type="CD-CODE" id="91857CE7">
    <property type="entry name" value="Nucleolus"/>
</dbReference>
<dbReference type="ChiTaRS" id="SEC22B">
    <property type="organism name" value="human"/>
</dbReference>
<dbReference type="EvolutionaryTrace" id="O75396"/>
<dbReference type="GeneWiki" id="SEC22B"/>
<dbReference type="GenomeRNAi" id="9554"/>
<dbReference type="Pharos" id="O75396">
    <property type="development level" value="Tbio"/>
</dbReference>
<dbReference type="PRO" id="PR:O75396"/>
<dbReference type="Proteomes" id="UP000005640">
    <property type="component" value="Chromosome 1"/>
</dbReference>
<dbReference type="RNAct" id="O75396">
    <property type="molecule type" value="protein"/>
</dbReference>
<dbReference type="Bgee" id="ENSG00000265808">
    <property type="expression patterns" value="Expressed in calcaneal tendon and 137 other cell types or tissues"/>
</dbReference>
<dbReference type="ExpressionAtlas" id="O75396">
    <property type="expression patterns" value="baseline and differential"/>
</dbReference>
<dbReference type="GO" id="GO:0005789">
    <property type="term" value="C:endoplasmic reticulum membrane"/>
    <property type="evidence" value="ECO:0000304"/>
    <property type="project" value="Reactome"/>
</dbReference>
<dbReference type="GO" id="GO:0005793">
    <property type="term" value="C:endoplasmic reticulum-Golgi intermediate compartment"/>
    <property type="evidence" value="ECO:0000314"/>
    <property type="project" value="UniProtKB"/>
</dbReference>
<dbReference type="GO" id="GO:0033116">
    <property type="term" value="C:endoplasmic reticulum-Golgi intermediate compartment membrane"/>
    <property type="evidence" value="ECO:0000304"/>
    <property type="project" value="Reactome"/>
</dbReference>
<dbReference type="GO" id="GO:0012507">
    <property type="term" value="C:ER to Golgi transport vesicle membrane"/>
    <property type="evidence" value="ECO:0000314"/>
    <property type="project" value="UniProtKB"/>
</dbReference>
<dbReference type="GO" id="GO:0000139">
    <property type="term" value="C:Golgi membrane"/>
    <property type="evidence" value="ECO:0000304"/>
    <property type="project" value="Reactome"/>
</dbReference>
<dbReference type="GO" id="GO:0042470">
    <property type="term" value="C:melanosome"/>
    <property type="evidence" value="ECO:0007669"/>
    <property type="project" value="UniProtKB-SubCell"/>
</dbReference>
<dbReference type="GO" id="GO:0030670">
    <property type="term" value="C:phagocytic vesicle membrane"/>
    <property type="evidence" value="ECO:0000304"/>
    <property type="project" value="Reactome"/>
</dbReference>
<dbReference type="GO" id="GO:0030133">
    <property type="term" value="C:transport vesicle"/>
    <property type="evidence" value="ECO:0000304"/>
    <property type="project" value="Reactome"/>
</dbReference>
<dbReference type="GO" id="GO:0005484">
    <property type="term" value="F:SNAP receptor activity"/>
    <property type="evidence" value="ECO:0007669"/>
    <property type="project" value="InterPro"/>
</dbReference>
<dbReference type="GO" id="GO:0006888">
    <property type="term" value="P:endoplasmic reticulum to Golgi vesicle-mediated transport"/>
    <property type="evidence" value="ECO:0000304"/>
    <property type="project" value="ProtInc"/>
</dbReference>
<dbReference type="GO" id="GO:1902902">
    <property type="term" value="P:negative regulation of autophagosome assembly"/>
    <property type="evidence" value="ECO:0000315"/>
    <property type="project" value="UniProtKB"/>
</dbReference>
<dbReference type="GO" id="GO:0045732">
    <property type="term" value="P:positive regulation of protein catabolic process"/>
    <property type="evidence" value="ECO:0000315"/>
    <property type="project" value="UniProtKB"/>
</dbReference>
<dbReference type="GO" id="GO:0015031">
    <property type="term" value="P:protein transport"/>
    <property type="evidence" value="ECO:0007669"/>
    <property type="project" value="UniProtKB-KW"/>
</dbReference>
<dbReference type="GO" id="GO:0006890">
    <property type="term" value="P:retrograde vesicle-mediated transport, Golgi to endoplasmic reticulum"/>
    <property type="evidence" value="ECO:0007669"/>
    <property type="project" value="InterPro"/>
</dbReference>
<dbReference type="CDD" id="cd14824">
    <property type="entry name" value="Longin"/>
    <property type="match status" value="1"/>
</dbReference>
<dbReference type="CDD" id="cd15866">
    <property type="entry name" value="R-SNARE_SEC22"/>
    <property type="match status" value="1"/>
</dbReference>
<dbReference type="FunFam" id="1.20.5.110:FF:000019">
    <property type="entry name" value="Vesicle-trafficking protein SEC22b"/>
    <property type="match status" value="1"/>
</dbReference>
<dbReference type="FunFam" id="3.30.450.50:FF:000004">
    <property type="entry name" value="vesicle-trafficking protein SEC22b"/>
    <property type="match status" value="1"/>
</dbReference>
<dbReference type="Gene3D" id="1.20.5.110">
    <property type="match status" value="1"/>
</dbReference>
<dbReference type="Gene3D" id="3.30.450.50">
    <property type="entry name" value="Longin domain"/>
    <property type="match status" value="1"/>
</dbReference>
<dbReference type="InterPro" id="IPR011012">
    <property type="entry name" value="Longin-like_dom_sf"/>
</dbReference>
<dbReference type="InterPro" id="IPR010908">
    <property type="entry name" value="Longin_dom"/>
</dbReference>
<dbReference type="InterPro" id="IPR044565">
    <property type="entry name" value="Sec22"/>
</dbReference>
<dbReference type="InterPro" id="IPR001388">
    <property type="entry name" value="Synaptobrevin-like"/>
</dbReference>
<dbReference type="InterPro" id="IPR042855">
    <property type="entry name" value="V_SNARE_CC"/>
</dbReference>
<dbReference type="PANTHER" id="PTHR45837">
    <property type="entry name" value="VESICLE-TRAFFICKING PROTEIN SEC22B"/>
    <property type="match status" value="1"/>
</dbReference>
<dbReference type="Pfam" id="PF13774">
    <property type="entry name" value="Longin"/>
    <property type="match status" value="1"/>
</dbReference>
<dbReference type="Pfam" id="PF00957">
    <property type="entry name" value="Synaptobrevin"/>
    <property type="match status" value="1"/>
</dbReference>
<dbReference type="PRINTS" id="PR00219">
    <property type="entry name" value="SYNAPTOBREVN"/>
</dbReference>
<dbReference type="SMART" id="SM01270">
    <property type="entry name" value="Longin"/>
    <property type="match status" value="1"/>
</dbReference>
<dbReference type="SUPFAM" id="SSF58038">
    <property type="entry name" value="SNARE fusion complex"/>
    <property type="match status" value="1"/>
</dbReference>
<dbReference type="SUPFAM" id="SSF64356">
    <property type="entry name" value="SNARE-like"/>
    <property type="match status" value="1"/>
</dbReference>
<dbReference type="PROSITE" id="PS50859">
    <property type="entry name" value="LONGIN"/>
    <property type="match status" value="1"/>
</dbReference>
<dbReference type="PROSITE" id="PS50892">
    <property type="entry name" value="V_SNARE"/>
    <property type="match status" value="1"/>
</dbReference>
<gene>
    <name type="primary">SEC22B</name>
    <name type="synonym">SEC22L1</name>
</gene>
<sequence>MVLLTMIARVADGLPLAASMQEDEQSGRDLQQYQSQAKQLFRKLNEQSPTRCTLEAGAMTFHYIIEQGVCYLVLCEAAFPKKLAFAYLEDLHSEFDEQHGKKVPTVSRPYSFIEFDTFIQKTKKLYIDSRARRNLGSINTELQDVQRIMVANIEEVLQRGEALSALDSKANNLSSLSKKYRQDAKYLNMRSTYAKLAAVAVFFIMLIVYVRFWWL</sequence>
<reference key="1">
    <citation type="journal article" date="1998" name="Proc. Natl. Acad. Sci. U.S.A.">
        <title>Identification of genes expressed in human CD34(+) hematopoietic stem/progenitor cells by expressed sequence tags and efficient full-length cDNA cloning.</title>
        <authorList>
            <person name="Mao M."/>
            <person name="Fu G."/>
            <person name="Wu J.-S."/>
            <person name="Zhang Q.-H."/>
            <person name="Zhou J."/>
            <person name="Kan L.-X."/>
            <person name="Huang Q.-H."/>
            <person name="He K.-L."/>
            <person name="Gu B.-W."/>
            <person name="Han Z.-G."/>
            <person name="Shen Y."/>
            <person name="Gu J."/>
            <person name="Yu Y.-P."/>
            <person name="Xu S.-H."/>
            <person name="Wang Y.-X."/>
            <person name="Chen S.-J."/>
            <person name="Chen Z."/>
        </authorList>
    </citation>
    <scope>NUCLEOTIDE SEQUENCE [LARGE SCALE MRNA]</scope>
    <source>
        <tissue>Umbilical cord blood</tissue>
    </source>
</reference>
<reference key="2">
    <citation type="journal article" date="2004" name="Nat. Genet.">
        <title>Complete sequencing and characterization of 21,243 full-length human cDNAs.</title>
        <authorList>
            <person name="Ota T."/>
            <person name="Suzuki Y."/>
            <person name="Nishikawa T."/>
            <person name="Otsuki T."/>
            <person name="Sugiyama T."/>
            <person name="Irie R."/>
            <person name="Wakamatsu A."/>
            <person name="Hayashi K."/>
            <person name="Sato H."/>
            <person name="Nagai K."/>
            <person name="Kimura K."/>
            <person name="Makita H."/>
            <person name="Sekine M."/>
            <person name="Obayashi M."/>
            <person name="Nishi T."/>
            <person name="Shibahara T."/>
            <person name="Tanaka T."/>
            <person name="Ishii S."/>
            <person name="Yamamoto J."/>
            <person name="Saito K."/>
            <person name="Kawai Y."/>
            <person name="Isono Y."/>
            <person name="Nakamura Y."/>
            <person name="Nagahari K."/>
            <person name="Murakami K."/>
            <person name="Yasuda T."/>
            <person name="Iwayanagi T."/>
            <person name="Wagatsuma M."/>
            <person name="Shiratori A."/>
            <person name="Sudo H."/>
            <person name="Hosoiri T."/>
            <person name="Kaku Y."/>
            <person name="Kodaira H."/>
            <person name="Kondo H."/>
            <person name="Sugawara M."/>
            <person name="Takahashi M."/>
            <person name="Kanda K."/>
            <person name="Yokoi T."/>
            <person name="Furuya T."/>
            <person name="Kikkawa E."/>
            <person name="Omura Y."/>
            <person name="Abe K."/>
            <person name="Kamihara K."/>
            <person name="Katsuta N."/>
            <person name="Sato K."/>
            <person name="Tanikawa M."/>
            <person name="Yamazaki M."/>
            <person name="Ninomiya K."/>
            <person name="Ishibashi T."/>
            <person name="Yamashita H."/>
            <person name="Murakawa K."/>
            <person name="Fujimori K."/>
            <person name="Tanai H."/>
            <person name="Kimata M."/>
            <person name="Watanabe M."/>
            <person name="Hiraoka S."/>
            <person name="Chiba Y."/>
            <person name="Ishida S."/>
            <person name="Ono Y."/>
            <person name="Takiguchi S."/>
            <person name="Watanabe S."/>
            <person name="Yosida M."/>
            <person name="Hotuta T."/>
            <person name="Kusano J."/>
            <person name="Kanehori K."/>
            <person name="Takahashi-Fujii A."/>
            <person name="Hara H."/>
            <person name="Tanase T.-O."/>
            <person name="Nomura Y."/>
            <person name="Togiya S."/>
            <person name="Komai F."/>
            <person name="Hara R."/>
            <person name="Takeuchi K."/>
            <person name="Arita M."/>
            <person name="Imose N."/>
            <person name="Musashino K."/>
            <person name="Yuuki H."/>
            <person name="Oshima A."/>
            <person name="Sasaki N."/>
            <person name="Aotsuka S."/>
            <person name="Yoshikawa Y."/>
            <person name="Matsunawa H."/>
            <person name="Ichihara T."/>
            <person name="Shiohata N."/>
            <person name="Sano S."/>
            <person name="Moriya S."/>
            <person name="Momiyama H."/>
            <person name="Satoh N."/>
            <person name="Takami S."/>
            <person name="Terashima Y."/>
            <person name="Suzuki O."/>
            <person name="Nakagawa S."/>
            <person name="Senoh A."/>
            <person name="Mizoguchi H."/>
            <person name="Goto Y."/>
            <person name="Shimizu F."/>
            <person name="Wakebe H."/>
            <person name="Hishigaki H."/>
            <person name="Watanabe T."/>
            <person name="Sugiyama A."/>
            <person name="Takemoto M."/>
            <person name="Kawakami B."/>
            <person name="Yamazaki M."/>
            <person name="Watanabe K."/>
            <person name="Kumagai A."/>
            <person name="Itakura S."/>
            <person name="Fukuzumi Y."/>
            <person name="Fujimori Y."/>
            <person name="Komiyama M."/>
            <person name="Tashiro H."/>
            <person name="Tanigami A."/>
            <person name="Fujiwara T."/>
            <person name="Ono T."/>
            <person name="Yamada K."/>
            <person name="Fujii Y."/>
            <person name="Ozaki K."/>
            <person name="Hirao M."/>
            <person name="Ohmori Y."/>
            <person name="Kawabata A."/>
            <person name="Hikiji T."/>
            <person name="Kobatake N."/>
            <person name="Inagaki H."/>
            <person name="Ikema Y."/>
            <person name="Okamoto S."/>
            <person name="Okitani R."/>
            <person name="Kawakami T."/>
            <person name="Noguchi S."/>
            <person name="Itoh T."/>
            <person name="Shigeta K."/>
            <person name="Senba T."/>
            <person name="Matsumura K."/>
            <person name="Nakajima Y."/>
            <person name="Mizuno T."/>
            <person name="Morinaga M."/>
            <person name="Sasaki M."/>
            <person name="Togashi T."/>
            <person name="Oyama M."/>
            <person name="Hata H."/>
            <person name="Watanabe M."/>
            <person name="Komatsu T."/>
            <person name="Mizushima-Sugano J."/>
            <person name="Satoh T."/>
            <person name="Shirai Y."/>
            <person name="Takahashi Y."/>
            <person name="Nakagawa K."/>
            <person name="Okumura K."/>
            <person name="Nagase T."/>
            <person name="Nomura N."/>
            <person name="Kikuchi H."/>
            <person name="Masuho Y."/>
            <person name="Yamashita R."/>
            <person name="Nakai K."/>
            <person name="Yada T."/>
            <person name="Nakamura Y."/>
            <person name="Ohara O."/>
            <person name="Isogai T."/>
            <person name="Sugano S."/>
        </authorList>
    </citation>
    <scope>NUCLEOTIDE SEQUENCE [LARGE SCALE MRNA]</scope>
    <source>
        <tissue>Caudate nucleus</tissue>
    </source>
</reference>
<reference key="3">
    <citation type="journal article" date="2006" name="Nature">
        <title>The DNA sequence and biological annotation of human chromosome 1.</title>
        <authorList>
            <person name="Gregory S.G."/>
            <person name="Barlow K.F."/>
            <person name="McLay K.E."/>
            <person name="Kaul R."/>
            <person name="Swarbreck D."/>
            <person name="Dunham A."/>
            <person name="Scott C.E."/>
            <person name="Howe K.L."/>
            <person name="Woodfine K."/>
            <person name="Spencer C.C.A."/>
            <person name="Jones M.C."/>
            <person name="Gillson C."/>
            <person name="Searle S."/>
            <person name="Zhou Y."/>
            <person name="Kokocinski F."/>
            <person name="McDonald L."/>
            <person name="Evans R."/>
            <person name="Phillips K."/>
            <person name="Atkinson A."/>
            <person name="Cooper R."/>
            <person name="Jones C."/>
            <person name="Hall R.E."/>
            <person name="Andrews T.D."/>
            <person name="Lloyd C."/>
            <person name="Ainscough R."/>
            <person name="Almeida J.P."/>
            <person name="Ambrose K.D."/>
            <person name="Anderson F."/>
            <person name="Andrew R.W."/>
            <person name="Ashwell R.I.S."/>
            <person name="Aubin K."/>
            <person name="Babbage A.K."/>
            <person name="Bagguley C.L."/>
            <person name="Bailey J."/>
            <person name="Beasley H."/>
            <person name="Bethel G."/>
            <person name="Bird C.P."/>
            <person name="Bray-Allen S."/>
            <person name="Brown J.Y."/>
            <person name="Brown A.J."/>
            <person name="Buckley D."/>
            <person name="Burton J."/>
            <person name="Bye J."/>
            <person name="Carder C."/>
            <person name="Chapman J.C."/>
            <person name="Clark S.Y."/>
            <person name="Clarke G."/>
            <person name="Clee C."/>
            <person name="Cobley V."/>
            <person name="Collier R.E."/>
            <person name="Corby N."/>
            <person name="Coville G.J."/>
            <person name="Davies J."/>
            <person name="Deadman R."/>
            <person name="Dunn M."/>
            <person name="Earthrowl M."/>
            <person name="Ellington A.G."/>
            <person name="Errington H."/>
            <person name="Frankish A."/>
            <person name="Frankland J."/>
            <person name="French L."/>
            <person name="Garner P."/>
            <person name="Garnett J."/>
            <person name="Gay L."/>
            <person name="Ghori M.R.J."/>
            <person name="Gibson R."/>
            <person name="Gilby L.M."/>
            <person name="Gillett W."/>
            <person name="Glithero R.J."/>
            <person name="Grafham D.V."/>
            <person name="Griffiths C."/>
            <person name="Griffiths-Jones S."/>
            <person name="Grocock R."/>
            <person name="Hammond S."/>
            <person name="Harrison E.S.I."/>
            <person name="Hart E."/>
            <person name="Haugen E."/>
            <person name="Heath P.D."/>
            <person name="Holmes S."/>
            <person name="Holt K."/>
            <person name="Howden P.J."/>
            <person name="Hunt A.R."/>
            <person name="Hunt S.E."/>
            <person name="Hunter G."/>
            <person name="Isherwood J."/>
            <person name="James R."/>
            <person name="Johnson C."/>
            <person name="Johnson D."/>
            <person name="Joy A."/>
            <person name="Kay M."/>
            <person name="Kershaw J.K."/>
            <person name="Kibukawa M."/>
            <person name="Kimberley A.M."/>
            <person name="King A."/>
            <person name="Knights A.J."/>
            <person name="Lad H."/>
            <person name="Laird G."/>
            <person name="Lawlor S."/>
            <person name="Leongamornlert D.A."/>
            <person name="Lloyd D.M."/>
            <person name="Loveland J."/>
            <person name="Lovell J."/>
            <person name="Lush M.J."/>
            <person name="Lyne R."/>
            <person name="Martin S."/>
            <person name="Mashreghi-Mohammadi M."/>
            <person name="Matthews L."/>
            <person name="Matthews N.S.W."/>
            <person name="McLaren S."/>
            <person name="Milne S."/>
            <person name="Mistry S."/>
            <person name="Moore M.J.F."/>
            <person name="Nickerson T."/>
            <person name="O'Dell C.N."/>
            <person name="Oliver K."/>
            <person name="Palmeiri A."/>
            <person name="Palmer S.A."/>
            <person name="Parker A."/>
            <person name="Patel D."/>
            <person name="Pearce A.V."/>
            <person name="Peck A.I."/>
            <person name="Pelan S."/>
            <person name="Phelps K."/>
            <person name="Phillimore B.J."/>
            <person name="Plumb R."/>
            <person name="Rajan J."/>
            <person name="Raymond C."/>
            <person name="Rouse G."/>
            <person name="Saenphimmachak C."/>
            <person name="Sehra H.K."/>
            <person name="Sheridan E."/>
            <person name="Shownkeen R."/>
            <person name="Sims S."/>
            <person name="Skuce C.D."/>
            <person name="Smith M."/>
            <person name="Steward C."/>
            <person name="Subramanian S."/>
            <person name="Sycamore N."/>
            <person name="Tracey A."/>
            <person name="Tromans A."/>
            <person name="Van Helmond Z."/>
            <person name="Wall M."/>
            <person name="Wallis J.M."/>
            <person name="White S."/>
            <person name="Whitehead S.L."/>
            <person name="Wilkinson J.E."/>
            <person name="Willey D.L."/>
            <person name="Williams H."/>
            <person name="Wilming L."/>
            <person name="Wray P.W."/>
            <person name="Wu Z."/>
            <person name="Coulson A."/>
            <person name="Vaudin M."/>
            <person name="Sulston J.E."/>
            <person name="Durbin R.M."/>
            <person name="Hubbard T."/>
            <person name="Wooster R."/>
            <person name="Dunham I."/>
            <person name="Carter N.P."/>
            <person name="McVean G."/>
            <person name="Ross M.T."/>
            <person name="Harrow J."/>
            <person name="Olson M.V."/>
            <person name="Beck S."/>
            <person name="Rogers J."/>
            <person name="Bentley D.R."/>
        </authorList>
    </citation>
    <scope>NUCLEOTIDE SEQUENCE [LARGE SCALE GENOMIC DNA]</scope>
</reference>
<reference key="4">
    <citation type="journal article" date="2004" name="Genome Res.">
        <title>The status, quality, and expansion of the NIH full-length cDNA project: the Mammalian Gene Collection (MGC).</title>
        <authorList>
            <consortium name="The MGC Project Team"/>
        </authorList>
    </citation>
    <scope>NUCLEOTIDE SEQUENCE [LARGE SCALE MRNA]</scope>
    <source>
        <tissue>Skin</tissue>
    </source>
</reference>
<reference key="5">
    <citation type="submission" date="2005-11" db="UniProtKB">
        <authorList>
            <person name="Bienvenut W.V."/>
            <person name="Claeys D."/>
        </authorList>
    </citation>
    <scope>PROTEIN SEQUENCE OF 2-9; 29-38 AND 134-147</scope>
    <scope>CLEAVAGE OF INITIATOR METHIONINE</scope>
    <scope>IDENTIFICATION BY MASS SPECTROMETRY</scope>
    <source>
        <tissue>Platelet</tissue>
    </source>
</reference>
<reference key="6">
    <citation type="journal article" date="2004" name="EMBO J.">
        <title>Involvement of BNIP1 in apoptosis and endoplasmic reticulum membrane fusion.</title>
        <authorList>
            <person name="Nakajima K."/>
            <person name="Hirose H."/>
            <person name="Taniguchi M."/>
            <person name="Kurashina H."/>
            <person name="Arasaki K."/>
            <person name="Nagahama M."/>
            <person name="Tani K."/>
            <person name="Yamamoto A."/>
            <person name="Tagaya M."/>
        </authorList>
    </citation>
    <scope>FUNCTION</scope>
    <scope>INTERACTION WITH BNIP1; STX18 AND USE1L</scope>
</reference>
<reference key="7">
    <citation type="journal article" date="2006" name="J. Proteome Res.">
        <title>Proteomic and bioinformatic characterization of the biogenesis and function of melanosomes.</title>
        <authorList>
            <person name="Chi A."/>
            <person name="Valencia J.C."/>
            <person name="Hu Z.-Z."/>
            <person name="Watabe H."/>
            <person name="Yamaguchi H."/>
            <person name="Mangini N.J."/>
            <person name="Huang H."/>
            <person name="Canfield V.A."/>
            <person name="Cheng K.C."/>
            <person name="Yang F."/>
            <person name="Abe R."/>
            <person name="Yamagishi S."/>
            <person name="Shabanowitz J."/>
            <person name="Hearing V.J."/>
            <person name="Wu C."/>
            <person name="Appella E."/>
            <person name="Hunt D.F."/>
        </authorList>
    </citation>
    <scope>SUBCELLULAR LOCATION [LARGE SCALE ANALYSIS]</scope>
    <source>
        <tissue>Melanoma</tissue>
    </source>
</reference>
<reference key="8">
    <citation type="journal article" date="2008" name="Mol. Cell">
        <title>Kinase-selective enrichment enables quantitative phosphoproteomics of the kinome across the cell cycle.</title>
        <authorList>
            <person name="Daub H."/>
            <person name="Olsen J.V."/>
            <person name="Bairlein M."/>
            <person name="Gnad F."/>
            <person name="Oppermann F.S."/>
            <person name="Korner R."/>
            <person name="Greff Z."/>
            <person name="Keri G."/>
            <person name="Stemmann O."/>
            <person name="Mann M."/>
        </authorList>
    </citation>
    <scope>PHOSPHORYLATION [LARGE SCALE ANALYSIS] AT SER-137</scope>
    <scope>IDENTIFICATION BY MASS SPECTROMETRY [LARGE SCALE ANALYSIS]</scope>
    <source>
        <tissue>Cervix carcinoma</tissue>
    </source>
</reference>
<reference key="9">
    <citation type="journal article" date="2008" name="Proc. Natl. Acad. Sci. U.S.A.">
        <title>A quantitative atlas of mitotic phosphorylation.</title>
        <authorList>
            <person name="Dephoure N."/>
            <person name="Zhou C."/>
            <person name="Villen J."/>
            <person name="Beausoleil S.A."/>
            <person name="Bakalarski C.E."/>
            <person name="Elledge S.J."/>
            <person name="Gygi S.P."/>
        </authorList>
    </citation>
    <scope>PHOSPHORYLATION [LARGE SCALE ANALYSIS] AT SER-137</scope>
    <scope>IDENTIFICATION BY MASS SPECTROMETRY [LARGE SCALE ANALYSIS]</scope>
    <source>
        <tissue>Cervix carcinoma</tissue>
    </source>
</reference>
<reference key="10">
    <citation type="journal article" date="2009" name="Science">
        <title>Lysine acetylation targets protein complexes and co-regulates major cellular functions.</title>
        <authorList>
            <person name="Choudhary C."/>
            <person name="Kumar C."/>
            <person name="Gnad F."/>
            <person name="Nielsen M.L."/>
            <person name="Rehman M."/>
            <person name="Walther T.C."/>
            <person name="Olsen J.V."/>
            <person name="Mann M."/>
        </authorList>
    </citation>
    <scope>ACETYLATION [LARGE SCALE ANALYSIS] AT LYS-38</scope>
    <scope>IDENTIFICATION BY MASS SPECTROMETRY [LARGE SCALE ANALYSIS]</scope>
</reference>
<reference key="11">
    <citation type="journal article" date="2010" name="Sci. Signal.">
        <title>Quantitative phosphoproteomics reveals widespread full phosphorylation site occupancy during mitosis.</title>
        <authorList>
            <person name="Olsen J.V."/>
            <person name="Vermeulen M."/>
            <person name="Santamaria A."/>
            <person name="Kumar C."/>
            <person name="Miller M.L."/>
            <person name="Jensen L.J."/>
            <person name="Gnad F."/>
            <person name="Cox J."/>
            <person name="Jensen T.S."/>
            <person name="Nigg E.A."/>
            <person name="Brunak S."/>
            <person name="Mann M."/>
        </authorList>
    </citation>
    <scope>PHOSPHORYLATION [LARGE SCALE ANALYSIS] AT SER-137</scope>
    <scope>IDENTIFICATION BY MASS SPECTROMETRY [LARGE SCALE ANALYSIS]</scope>
    <source>
        <tissue>Cervix carcinoma</tissue>
    </source>
</reference>
<reference key="12">
    <citation type="journal article" date="2011" name="Sci. Signal.">
        <title>System-wide temporal characterization of the proteome and phosphoproteome of human embryonic stem cell differentiation.</title>
        <authorList>
            <person name="Rigbolt K.T."/>
            <person name="Prokhorova T.A."/>
            <person name="Akimov V."/>
            <person name="Henningsen J."/>
            <person name="Johansen P.T."/>
            <person name="Kratchmarova I."/>
            <person name="Kassem M."/>
            <person name="Mann M."/>
            <person name="Olsen J.V."/>
            <person name="Blagoev B."/>
        </authorList>
    </citation>
    <scope>PHOSPHORYLATION [LARGE SCALE ANALYSIS] AT SER-137; THR-140 AND SER-177</scope>
    <scope>IDENTIFICATION BY MASS SPECTROMETRY [LARGE SCALE ANALYSIS]</scope>
</reference>
<reference key="13">
    <citation type="journal article" date="2012" name="Proc. Natl. Acad. Sci. U.S.A.">
        <title>N-terminal acetylome analyses and functional insights of the N-terminal acetyltransferase NatB.</title>
        <authorList>
            <person name="Van Damme P."/>
            <person name="Lasa M."/>
            <person name="Polevoda B."/>
            <person name="Gazquez C."/>
            <person name="Elosegui-Artola A."/>
            <person name="Kim D.S."/>
            <person name="De Juan-Pardo E."/>
            <person name="Demeyer K."/>
            <person name="Hole K."/>
            <person name="Larrea E."/>
            <person name="Timmerman E."/>
            <person name="Prieto J."/>
            <person name="Arnesen T."/>
            <person name="Sherman F."/>
            <person name="Gevaert K."/>
            <person name="Aldabe R."/>
        </authorList>
    </citation>
    <scope>IDENTIFICATION BY MASS SPECTROMETRY [LARGE SCALE ANALYSIS]</scope>
</reference>
<reference key="14">
    <citation type="journal article" date="2013" name="J. Proteome Res.">
        <title>Toward a comprehensive characterization of a human cancer cell phosphoproteome.</title>
        <authorList>
            <person name="Zhou H."/>
            <person name="Di Palma S."/>
            <person name="Preisinger C."/>
            <person name="Peng M."/>
            <person name="Polat A.N."/>
            <person name="Heck A.J."/>
            <person name="Mohammed S."/>
        </authorList>
    </citation>
    <scope>PHOSPHORYLATION [LARGE SCALE ANALYSIS] AT SER-137; SER-164; SER-168; SER-174 AND SER-177</scope>
    <scope>IDENTIFICATION BY MASS SPECTROMETRY [LARGE SCALE ANALYSIS]</scope>
    <source>
        <tissue>Cervix carcinoma</tissue>
        <tissue>Erythroleukemia</tissue>
    </source>
</reference>
<reference key="15">
    <citation type="journal article" date="2014" name="J. Proteomics">
        <title>An enzyme assisted RP-RPLC approach for in-depth analysis of human liver phosphoproteome.</title>
        <authorList>
            <person name="Bian Y."/>
            <person name="Song C."/>
            <person name="Cheng K."/>
            <person name="Dong M."/>
            <person name="Wang F."/>
            <person name="Huang J."/>
            <person name="Sun D."/>
            <person name="Wang L."/>
            <person name="Ye M."/>
            <person name="Zou H."/>
        </authorList>
    </citation>
    <scope>PHOSPHORYLATION [LARGE SCALE ANALYSIS] AT SER-137 AND SER-168</scope>
    <scope>IDENTIFICATION BY MASS SPECTROMETRY [LARGE SCALE ANALYSIS]</scope>
    <source>
        <tissue>Liver</tissue>
    </source>
</reference>
<reference key="16">
    <citation type="journal article" date="2015" name="Proteomics">
        <title>N-terminome analysis of the human mitochondrial proteome.</title>
        <authorList>
            <person name="Vaca Jacome A.S."/>
            <person name="Rabilloud T."/>
            <person name="Schaeffer-Reiss C."/>
            <person name="Rompais M."/>
            <person name="Ayoub D."/>
            <person name="Lane L."/>
            <person name="Bairoch A."/>
            <person name="Van Dorsselaer A."/>
            <person name="Carapito C."/>
        </authorList>
    </citation>
    <scope>CLEAVAGE OF INITIATOR METHIONINE [LARGE SCALE ANALYSIS]</scope>
    <scope>IDENTIFICATION BY MASS SPECTROMETRY [LARGE SCALE ANALYSIS]</scope>
</reference>
<reference key="17">
    <citation type="journal article" date="2021" name="EMBO Mol. Med.">
        <title>BET1 variants establish impaired vesicular transport as a cause for muscular dystrophy with epilepsy.</title>
        <authorList>
            <person name="Donkervoort S."/>
            <person name="Krause N."/>
            <person name="Dergai M."/>
            <person name="Yun P."/>
            <person name="Koliwer J."/>
            <person name="Gorokhova S."/>
            <person name="Geist Hauserman J."/>
            <person name="Cummings B.B."/>
            <person name="Hu Y."/>
            <person name="Smith R."/>
            <person name="Uapinyoying P."/>
            <person name="Ganesh V.S."/>
            <person name="Ghosh P.S."/>
            <person name="Monaghan K.G."/>
            <person name="Edassery S.L."/>
            <person name="Ferle P.E."/>
            <person name="Silverstein S."/>
            <person name="Chao K.R."/>
            <person name="Snyder M."/>
            <person name="Ellingwood S."/>
            <person name="Bharucha-Goebel D."/>
            <person name="Iannaccone S.T."/>
            <person name="Dal Peraro M."/>
            <person name="Foley A.R."/>
            <person name="Savas J.N."/>
            <person name="Bolduc V."/>
            <person name="Fasshauer D."/>
            <person name="Boennemann C.G."/>
            <person name="Schwake M."/>
        </authorList>
    </citation>
    <scope>INTERACTION WITH BET1</scope>
</reference>
<reference evidence="12 13" key="18">
    <citation type="journal article" date="2007" name="Mol. Cell">
        <title>The transport signal on Sec22 for packaging into COPII-coated vesicles is a conformational epitope.</title>
        <authorList>
            <person name="Mancias J.D."/>
            <person name="Goldberg J."/>
        </authorList>
    </citation>
    <scope>X-RAY CRYSTALLOGRAPHY (2.30 ANGSTROMS) OF 1-195 IN COMPLEX WITH SEC23A AND SEC24A</scope>
    <scope>INTERACTION WITH SEC23A AND SEC24A</scope>
</reference>
<reference evidence="14 15" key="19">
    <citation type="journal article" date="2008" name="EMBO J.">
        <title>Structural basis of cargo membrane protein discrimination by the human COPII coat machinery.</title>
        <authorList>
            <person name="Mancias J.D."/>
            <person name="Goldberg J."/>
        </authorList>
    </citation>
    <scope>X-RAY CRYSTALLOGRAPHY (2.70 ANGSTROMS) OF 1-157 IN COMPLEX WITH SEC23A AND SEC24A</scope>
    <scope>INTERACTION WITH SEC23A AND SEC24A</scope>
</reference>
<reference key="20">
    <citation type="journal article" date="2011" name="BMC Syst. Biol.">
        <title>Initial characterization of the human central proteome.</title>
        <authorList>
            <person name="Burkard T.R."/>
            <person name="Planyavsky M."/>
            <person name="Kaupe I."/>
            <person name="Breitwieser F.P."/>
            <person name="Buerckstuemmer T."/>
            <person name="Bennett K.L."/>
            <person name="Superti-Furga G."/>
            <person name="Colinge J."/>
        </authorList>
    </citation>
    <scope>IDENTIFICATION BY MASS SPECTROMETRY [LARGE SCALE ANALYSIS]</scope>
</reference>
<accession>O75396</accession>
<accession>A8K1G0</accession>